<name>EFP_BORA1</name>
<gene>
    <name evidence="1" type="primary">efp</name>
    <name type="ordered locus">BAV2518</name>
</gene>
<protein>
    <recommendedName>
        <fullName evidence="1">Elongation factor P</fullName>
        <shortName evidence="1">EF-P</shortName>
    </recommendedName>
</protein>
<accession>Q2KXA0</accession>
<proteinExistence type="inferred from homology"/>
<feature type="chain" id="PRO_1000010689" description="Elongation factor P">
    <location>
        <begin position="1"/>
        <end position="185"/>
    </location>
</feature>
<keyword id="KW-0963">Cytoplasm</keyword>
<keyword id="KW-0251">Elongation factor</keyword>
<keyword id="KW-0648">Protein biosynthesis</keyword>
<keyword id="KW-1185">Reference proteome</keyword>
<comment type="function">
    <text evidence="1">Involved in peptide bond synthesis. Stimulates efficient translation and peptide-bond synthesis on native or reconstituted 70S ribosomes in vitro. Probably functions indirectly by altering the affinity of the ribosome for aminoacyl-tRNA, thus increasing their reactivity as acceptors for peptidyl transferase.</text>
</comment>
<comment type="pathway">
    <text evidence="1">Protein biosynthesis; polypeptide chain elongation.</text>
</comment>
<comment type="subcellular location">
    <subcellularLocation>
        <location evidence="1">Cytoplasm</location>
    </subcellularLocation>
</comment>
<comment type="similarity">
    <text evidence="1">Belongs to the elongation factor P family.</text>
</comment>
<organism>
    <name type="scientific">Bordetella avium (strain 197N)</name>
    <dbReference type="NCBI Taxonomy" id="360910"/>
    <lineage>
        <taxon>Bacteria</taxon>
        <taxon>Pseudomonadati</taxon>
        <taxon>Pseudomonadota</taxon>
        <taxon>Betaproteobacteria</taxon>
        <taxon>Burkholderiales</taxon>
        <taxon>Alcaligenaceae</taxon>
        <taxon>Bordetella</taxon>
    </lineage>
</organism>
<reference key="1">
    <citation type="journal article" date="2006" name="J. Bacteriol.">
        <title>Comparison of the genome sequence of the poultry pathogen Bordetella avium with those of B. bronchiseptica, B. pertussis, and B. parapertussis reveals extensive diversity in surface structures associated with host interaction.</title>
        <authorList>
            <person name="Sebaihia M."/>
            <person name="Preston A."/>
            <person name="Maskell D.J."/>
            <person name="Kuzmiak H."/>
            <person name="Connell T.D."/>
            <person name="King N.D."/>
            <person name="Orndorff P.E."/>
            <person name="Miyamoto D.M."/>
            <person name="Thomson N.R."/>
            <person name="Harris D."/>
            <person name="Goble A."/>
            <person name="Lord A."/>
            <person name="Murphy L."/>
            <person name="Quail M.A."/>
            <person name="Rutter S."/>
            <person name="Squares R."/>
            <person name="Squares S."/>
            <person name="Woodward J."/>
            <person name="Parkhill J."/>
            <person name="Temple L.M."/>
        </authorList>
    </citation>
    <scope>NUCLEOTIDE SEQUENCE [LARGE SCALE GENOMIC DNA]</scope>
    <source>
        <strain>197N</strain>
    </source>
</reference>
<dbReference type="EMBL" id="AM167904">
    <property type="protein sequence ID" value="CAJ50128.1"/>
    <property type="molecule type" value="Genomic_DNA"/>
</dbReference>
<dbReference type="RefSeq" id="WP_012418174.1">
    <property type="nucleotide sequence ID" value="NC_010645.1"/>
</dbReference>
<dbReference type="SMR" id="Q2KXA0"/>
<dbReference type="STRING" id="360910.BAV2518"/>
<dbReference type="GeneID" id="92934301"/>
<dbReference type="KEGG" id="bav:BAV2518"/>
<dbReference type="eggNOG" id="COG0231">
    <property type="taxonomic scope" value="Bacteria"/>
</dbReference>
<dbReference type="HOGENOM" id="CLU_074944_2_1_4"/>
<dbReference type="OrthoDB" id="9801844at2"/>
<dbReference type="UniPathway" id="UPA00345"/>
<dbReference type="Proteomes" id="UP000001977">
    <property type="component" value="Chromosome"/>
</dbReference>
<dbReference type="GO" id="GO:0005737">
    <property type="term" value="C:cytoplasm"/>
    <property type="evidence" value="ECO:0007669"/>
    <property type="project" value="UniProtKB-SubCell"/>
</dbReference>
<dbReference type="GO" id="GO:0003746">
    <property type="term" value="F:translation elongation factor activity"/>
    <property type="evidence" value="ECO:0007669"/>
    <property type="project" value="UniProtKB-UniRule"/>
</dbReference>
<dbReference type="GO" id="GO:0043043">
    <property type="term" value="P:peptide biosynthetic process"/>
    <property type="evidence" value="ECO:0007669"/>
    <property type="project" value="InterPro"/>
</dbReference>
<dbReference type="CDD" id="cd04470">
    <property type="entry name" value="S1_EF-P_repeat_1"/>
    <property type="match status" value="1"/>
</dbReference>
<dbReference type="CDD" id="cd05794">
    <property type="entry name" value="S1_EF-P_repeat_2"/>
    <property type="match status" value="1"/>
</dbReference>
<dbReference type="FunFam" id="2.30.30.30:FF:000003">
    <property type="entry name" value="Elongation factor P"/>
    <property type="match status" value="1"/>
</dbReference>
<dbReference type="FunFam" id="2.40.50.140:FF:000004">
    <property type="entry name" value="Elongation factor P"/>
    <property type="match status" value="1"/>
</dbReference>
<dbReference type="FunFam" id="2.40.50.140:FF:000009">
    <property type="entry name" value="Elongation factor P"/>
    <property type="match status" value="1"/>
</dbReference>
<dbReference type="Gene3D" id="2.30.30.30">
    <property type="match status" value="1"/>
</dbReference>
<dbReference type="Gene3D" id="2.40.50.140">
    <property type="entry name" value="Nucleic acid-binding proteins"/>
    <property type="match status" value="2"/>
</dbReference>
<dbReference type="HAMAP" id="MF_00141">
    <property type="entry name" value="EF_P"/>
    <property type="match status" value="1"/>
</dbReference>
<dbReference type="InterPro" id="IPR015365">
    <property type="entry name" value="Elong-fact-P_C"/>
</dbReference>
<dbReference type="InterPro" id="IPR012340">
    <property type="entry name" value="NA-bd_OB-fold"/>
</dbReference>
<dbReference type="InterPro" id="IPR014722">
    <property type="entry name" value="Rib_uL2_dom2"/>
</dbReference>
<dbReference type="InterPro" id="IPR020599">
    <property type="entry name" value="Transl_elong_fac_P/YeiP"/>
</dbReference>
<dbReference type="InterPro" id="IPR013185">
    <property type="entry name" value="Transl_elong_KOW-like"/>
</dbReference>
<dbReference type="InterPro" id="IPR001059">
    <property type="entry name" value="Transl_elong_P/YeiP_cen"/>
</dbReference>
<dbReference type="InterPro" id="IPR013852">
    <property type="entry name" value="Transl_elong_P/YeiP_CS"/>
</dbReference>
<dbReference type="InterPro" id="IPR011768">
    <property type="entry name" value="Transl_elongation_fac_P"/>
</dbReference>
<dbReference type="InterPro" id="IPR008991">
    <property type="entry name" value="Translation_prot_SH3-like_sf"/>
</dbReference>
<dbReference type="NCBIfam" id="TIGR00038">
    <property type="entry name" value="efp"/>
    <property type="match status" value="1"/>
</dbReference>
<dbReference type="NCBIfam" id="NF001810">
    <property type="entry name" value="PRK00529.1"/>
    <property type="match status" value="1"/>
</dbReference>
<dbReference type="PANTHER" id="PTHR30053">
    <property type="entry name" value="ELONGATION FACTOR P"/>
    <property type="match status" value="1"/>
</dbReference>
<dbReference type="PANTHER" id="PTHR30053:SF12">
    <property type="entry name" value="ELONGATION FACTOR P (EF-P) FAMILY PROTEIN"/>
    <property type="match status" value="1"/>
</dbReference>
<dbReference type="Pfam" id="PF01132">
    <property type="entry name" value="EFP"/>
    <property type="match status" value="1"/>
</dbReference>
<dbReference type="Pfam" id="PF08207">
    <property type="entry name" value="EFP_N"/>
    <property type="match status" value="1"/>
</dbReference>
<dbReference type="Pfam" id="PF09285">
    <property type="entry name" value="Elong-fact-P_C"/>
    <property type="match status" value="1"/>
</dbReference>
<dbReference type="PIRSF" id="PIRSF005901">
    <property type="entry name" value="EF-P"/>
    <property type="match status" value="1"/>
</dbReference>
<dbReference type="SMART" id="SM01185">
    <property type="entry name" value="EFP"/>
    <property type="match status" value="1"/>
</dbReference>
<dbReference type="SMART" id="SM00841">
    <property type="entry name" value="Elong-fact-P_C"/>
    <property type="match status" value="1"/>
</dbReference>
<dbReference type="SUPFAM" id="SSF50249">
    <property type="entry name" value="Nucleic acid-binding proteins"/>
    <property type="match status" value="2"/>
</dbReference>
<dbReference type="SUPFAM" id="SSF50104">
    <property type="entry name" value="Translation proteins SH3-like domain"/>
    <property type="match status" value="1"/>
</dbReference>
<dbReference type="PROSITE" id="PS01275">
    <property type="entry name" value="EFP"/>
    <property type="match status" value="1"/>
</dbReference>
<evidence type="ECO:0000255" key="1">
    <source>
        <dbReference type="HAMAP-Rule" id="MF_00141"/>
    </source>
</evidence>
<sequence length="185" mass="20899">MKTAQELRVGNVVMVGKDPLVVQKTEYNKSGRNAAVVKLKFKNLLTGSASESVYKADEKFDIVMLERKECTYSYFGDPMYVFMDADYNQYEIEADSMGDALNYLEEAMPVEVVFYDGRAISVELPTILVREITYTEPAVRGDTSGKVLKPAKINTGYELQVPLFCAIGDKIEIDTRTNEYRSRVN</sequence>